<dbReference type="EC" id="5.1.1.4" evidence="2 3"/>
<dbReference type="EMBL" id="FP565809">
    <property type="protein sequence ID" value="CBH22348.1"/>
    <property type="molecule type" value="Genomic_DNA"/>
</dbReference>
<dbReference type="PDB" id="7PB3">
    <property type="method" value="X-ray"/>
    <property type="resolution" value="2.84 A"/>
    <property type="chains" value="AAA/BBB=1-335"/>
</dbReference>
<dbReference type="PDB" id="8A3F">
    <property type="method" value="X-ray"/>
    <property type="resolution" value="3.15 A"/>
    <property type="chains" value="AAA/BBB=1-335"/>
</dbReference>
<dbReference type="PDB" id="8A4R">
    <property type="method" value="X-ray"/>
    <property type="resolution" value="3.59 A"/>
    <property type="chains" value="AAA/BBB/CCC/DDD=1-335"/>
</dbReference>
<dbReference type="PDBsum" id="7PB3"/>
<dbReference type="PDBsum" id="8A3F"/>
<dbReference type="PDBsum" id="8A4R"/>
<dbReference type="SMR" id="E3PTZ4"/>
<dbReference type="STRING" id="1511.CLOST_2228"/>
<dbReference type="KEGG" id="cst:CLOST_2228"/>
<dbReference type="eggNOG" id="COG3938">
    <property type="taxonomic scope" value="Bacteria"/>
</dbReference>
<dbReference type="HOGENOM" id="CLU_036729_0_0_9"/>
<dbReference type="Proteomes" id="UP000007041">
    <property type="component" value="Chromosome"/>
</dbReference>
<dbReference type="GO" id="GO:0047580">
    <property type="term" value="F:4-hydroxyproline epimerase activity"/>
    <property type="evidence" value="ECO:0007669"/>
    <property type="project" value="TreeGrafter"/>
</dbReference>
<dbReference type="FunFam" id="3.10.310.10:FF:000005">
    <property type="entry name" value="Proline racemase"/>
    <property type="match status" value="1"/>
</dbReference>
<dbReference type="Gene3D" id="3.10.310.10">
    <property type="entry name" value="Diaminopimelate Epimerase, Chain A, domain 1"/>
    <property type="match status" value="2"/>
</dbReference>
<dbReference type="InterPro" id="IPR008794">
    <property type="entry name" value="Pro_racemase_fam"/>
</dbReference>
<dbReference type="NCBIfam" id="NF010576">
    <property type="entry name" value="PRK13969.1"/>
    <property type="match status" value="1"/>
</dbReference>
<dbReference type="PANTHER" id="PTHR33442:SF5">
    <property type="entry name" value="BIFUNCTIONAL TRANS-3-HYDROXY-L-PROLINE DEHYDRATASE_2-EPIMERASE"/>
    <property type="match status" value="1"/>
</dbReference>
<dbReference type="PANTHER" id="PTHR33442">
    <property type="entry name" value="TRANS-3-HYDROXY-L-PROLINE DEHYDRATASE"/>
    <property type="match status" value="1"/>
</dbReference>
<dbReference type="Pfam" id="PF05544">
    <property type="entry name" value="Pro_racemase"/>
    <property type="match status" value="1"/>
</dbReference>
<dbReference type="PIRSF" id="PIRSF029792">
    <property type="entry name" value="Pro_racemase"/>
    <property type="match status" value="1"/>
</dbReference>
<dbReference type="SFLD" id="SFLDS00028">
    <property type="entry name" value="Proline_Racemase"/>
    <property type="match status" value="1"/>
</dbReference>
<dbReference type="SUPFAM" id="SSF54506">
    <property type="entry name" value="Diaminopimelate epimerase-like"/>
    <property type="match status" value="1"/>
</dbReference>
<evidence type="ECO:0000250" key="1">
    <source>
        <dbReference type="UniProtKB" id="Q4KGU2"/>
    </source>
</evidence>
<evidence type="ECO:0000269" key="2">
    <source>
    </source>
</evidence>
<evidence type="ECO:0000269" key="3">
    <source>
    </source>
</evidence>
<evidence type="ECO:0000303" key="4">
    <source>
    </source>
</evidence>
<evidence type="ECO:0000303" key="5">
    <source>
    </source>
</evidence>
<evidence type="ECO:0000305" key="6"/>
<evidence type="ECO:0000312" key="7">
    <source>
        <dbReference type="EMBL" id="CBH22348.1"/>
    </source>
</evidence>
<name>PRAC_ACESD</name>
<accession>E3PTZ4</accession>
<comment type="function">
    <text evidence="2 3 4">Catalyzes the reversible interconversion of L- and D-proline (PubMed:24314397, PubMed:5722267). Likely functions as the proline racemase necessary for D-proline generation in order to discriminate it from the L-proline used for protein synthesis (PubMed:20937090).</text>
</comment>
<comment type="catalytic activity">
    <reaction evidence="2 3">
        <text>L-proline = D-proline</text>
        <dbReference type="Rhea" id="RHEA:10680"/>
        <dbReference type="ChEBI" id="CHEBI:57726"/>
        <dbReference type="ChEBI" id="CHEBI:60039"/>
        <dbReference type="EC" id="5.1.1.4"/>
    </reaction>
</comment>
<comment type="activity regulation">
    <text evidence="3">Inhibited by pyrrole-2-carboxylate in vitro.</text>
</comment>
<comment type="biophysicochemical properties">
    <kinetics>
        <KM evidence="3">2.3 mM for L-proline</KM>
        <KM evidence="3">3.8 mM for D-proline</KM>
        <KM evidence="2">7.2 mM for L-proline</KM>
        <text evidence="2">kcat is 64 sec(-1) with L-proline as substrate.</text>
    </kinetics>
</comment>
<comment type="miscellaneous">
    <text evidence="3">Differs from other amino acid racemases in that no requirement for pyridoxal phosphate could be shown.</text>
</comment>
<comment type="similarity">
    <text evidence="6">Belongs to the proline racemase family.</text>
</comment>
<protein>
    <recommendedName>
        <fullName evidence="4 5">Proline racemase</fullName>
        <shortName evidence="5">PR</shortName>
        <ecNumber evidence="2 3">5.1.1.4</ecNumber>
    </recommendedName>
    <alternativeName>
        <fullName evidence="6">AsProR</fullName>
    </alternativeName>
    <alternativeName>
        <fullName evidence="5">CsPR</fullName>
    </alternativeName>
</protein>
<gene>
    <name evidence="4 7" type="primary">prdF</name>
    <name evidence="7" type="ordered locus">CLOST_2228</name>
</gene>
<feature type="chain" id="PRO_0000454288" description="Proline racemase">
    <location>
        <begin position="1"/>
        <end position="335"/>
    </location>
</feature>
<feature type="active site" description="Proton acceptor" evidence="1">
    <location>
        <position position="91"/>
    </location>
</feature>
<feature type="active site" description="Proton donor" evidence="1">
    <location>
        <position position="256"/>
    </location>
</feature>
<proteinExistence type="evidence at protein level"/>
<sequence length="335" mass="36827">MKFSKGIHAIDSHTMGEPTRIVVGGIPQINGETMADKKKYLEDNLDYVRTALMHEPRGHNDMFGSIITSSNNKEADFGIIFMDGGGYLNMCGHGSIGAATVAVETGMVEMVEPVTNINMEAPAGLIKAKVMVENEKVKEVSITNVPSFLYMEDAKLEVPSLNKTITFDISFGGSFFAIIHAKELGVKVETSQVDVLKKLGIEIRDLINEKIKVQHPELEHIKTVDLVEIYDEPSNPEATYKNVVIFGQGQVDRSPCGTGTSAKLATLYKKGHLKIDEKFVYESITGTMFKGRVLEETKVGEFDAIIPEITGGAYITGFNHFVIDPEDPLKYGFTV</sequence>
<keyword id="KW-0002">3D-structure</keyword>
<keyword id="KW-0413">Isomerase</keyword>
<keyword id="KW-1185">Reference proteome</keyword>
<reference key="1">
    <citation type="journal article" date="2010" name="BMC Genomics">
        <title>Clostridium sticklandii, a specialist in amino acid degradation:revisiting its metabolism through its genome sequence.</title>
        <authorList>
            <person name="Fonknechten N."/>
            <person name="Chaussonnerie S."/>
            <person name="Tricot S."/>
            <person name="Lajus A."/>
            <person name="Andreesen J.R."/>
            <person name="Perchat N."/>
            <person name="Pelletier E."/>
            <person name="Gouyvenoux M."/>
            <person name="Barbe V."/>
            <person name="Salanoubat M."/>
            <person name="Le Paslier D."/>
            <person name="Weissenbach J."/>
            <person name="Cohen G.N."/>
            <person name="Kreimeyer A."/>
        </authorList>
    </citation>
    <scope>NUCLEOTIDE SEQUENCE [LARGE SCALE GENOMIC DNA]</scope>
    <scope>FUNCTION</scope>
    <source>
        <strain>ATCC 12662 / DSM 519 / JCM 1433 / CCUG 9281 / NCIMB 10654 / HF</strain>
    </source>
</reference>
<reference key="2">
    <citation type="journal article" date="1968" name="Biochemistry">
        <title>Purification and mechanism of action of proline racemase.</title>
        <authorList>
            <person name="Cardinale G.J."/>
            <person name="Abeles R.H."/>
        </authorList>
    </citation>
    <scope>FUNCTION</scope>
    <scope>CATALYTIC ACTIVITY</scope>
    <scope>BIOPHYSICOCHEMICAL PROPERTIES</scope>
    <scope>ACTIVITY REGULATION</scope>
    <source>
        <strain>ATCC 12662 / DSM 519 / JCM 1433 / CCUG 9281 / NCIMB 10654 / HF</strain>
    </source>
</reference>
<reference key="3">
    <citation type="journal article" date="2014" name="Bioorg. Med. Chem. Lett.">
        <title>Inhibition of serine and proline racemases by substrate-product analogues.</title>
        <authorList>
            <person name="Harty M."/>
            <person name="Nagar M."/>
            <person name="Atkinson L."/>
            <person name="Legay C.M."/>
            <person name="Derksen D.J."/>
            <person name="Bearne S.L."/>
        </authorList>
    </citation>
    <scope>FUNCTION</scope>
    <scope>CATALYTIC ACTIVITY</scope>
    <scope>BIOPHYSICOCHEMICAL PROPERTIES</scope>
    <scope>INHIBITION STUDY</scope>
    <source>
        <strain>ATCC 12662 / DSM 519 / JCM 1433 / CCUG 9281 / NCIMB 10654 / HF</strain>
    </source>
</reference>
<organism>
    <name type="scientific">Acetoanaerobium sticklandii (strain ATCC 12662 / DSM 519 / JCM 1433 / CCUG 9281 / NCIMB 10654 / HF)</name>
    <name type="common">Clostridium sticklandii</name>
    <dbReference type="NCBI Taxonomy" id="499177"/>
    <lineage>
        <taxon>Bacteria</taxon>
        <taxon>Bacillati</taxon>
        <taxon>Bacillota</taxon>
        <taxon>Clostridia</taxon>
        <taxon>Peptostreptococcales</taxon>
        <taxon>Filifactoraceae</taxon>
        <taxon>Acetoanaerobium</taxon>
    </lineage>
</organism>